<comment type="function">
    <text evidence="5">ABC transporter that may affect phytic acid transport and compartmentalization. May function directly or indirectly in removing phytic acid from the cytosol or in vesicle trafficking. Required for phytic acid accumulation in developing seeds. Phytic acid is the primary storage form of phosphorus in cereal grains and other plant seeds.</text>
</comment>
<comment type="subcellular location">
    <subcellularLocation>
        <location evidence="1">Membrane</location>
        <topology evidence="1">Multi-pass membrane protein</topology>
    </subcellularLocation>
</comment>
<comment type="tissue specificity">
    <text evidence="5">Expressed in roots, leaf sheaths, leaf blades and developing seeds.</text>
</comment>
<comment type="disruption phenotype">
    <text evidence="5">Strong reduction in seed phytic acid, and strong increase of inorganic phosphate and myo-inositol levels in seeds. Seedling lethality when homozygous.</text>
</comment>
<comment type="similarity">
    <text evidence="9">Belongs to the ABC transporter superfamily. ABCC family. Conjugate transporter (TC 3.A.1.208) subfamily.</text>
</comment>
<sequence>MPHFPNLPLPEAAAAAAHAALLALALLLLLLRSARALASRCASCLKTAPRRAAAVDGGLAAASSVGAWYRAALACCGYALLAQVAALSYEVAVAGSHVAVEALLLPAVQALAWAALLALAMQARAVGWGRFPVLVRVWWVVSFVLCVGIAYDDTRHLMGDDDDDEVDYAHMVANFASAPALGFLCLVGVMGSTGVELEFTDDDSSVHEPLLLGGQRRDADEEPGCLRVTPYGDAGIVSLATLSWLSPLLSVGAQRPLELADIPLMAHKDRAKSCYKAMSSHYERQRMERPGSEPSLAWAILKSFWREAAINGAFAAVNTIVSYVGPYLISYFVDYLSGKIEFPHEGYILASVFFVAKLLETLTARQWYLGVDVMGIHVKSGLTAMVYRKGLRLSNSSRQSHTSGEIVNYMAVDVQRVGDYAWYFHDIWMLPLQIILALAILYKNVGIAMVSTLVATVLSIAASVPVAKLQEHYQDKLMASKDERMRKTSECLKNMRILKLQAWEDRYRLKLEEMRNVECKWLRWALYSQAAVTFVFWSSPIFVAVITFGTCILLGGELTAGGVLSALATFRILQEPLRNFPDLISMIAQTRVSLDRLSHFLQQEELPDDATITVPHGSTDKAININDATFSWNPSSPTPTLSGINLSVVRGMRVAVCGVIGSGKSSLLSSILGEIPKLCGQVRISGSAAYVPQTAWIQSGNIEENILFGSPMDKQRYKRVIEACSLKKDLQLLQYGDQTIIGDRGINLSGGQKQRVQLARALYQDADIYLLDDPFSAVDAHTGSELFREYILTALASKTVIYVTHQIEFLPAADLILVLKDGHITQAGKYDDLLQAGTDFNALVCAHKEAIETMEFSEDSDEDTVSSVPIKRLTPSVSNIDNLKNKVSNNEKPSSTRGIKEKKKKPEERKKKRSVQEEERERGRVSLQVYLSYMGEAYKGTLIPLIILAQTMFQVLQIASNWWMAWANPQTEGDAPKTDSVVLLVVYMSLAFGSSLFVFVRSLLVATFGLATAQKLFVKMLRCVFRAPMSFFDTTPSGRILNRVSVDQSVVDLDIAFRLGGFASTTIQLLGIVAVMSKVTWQVLILIVPMAVACMWMQRYYIASSRELTRILSVQKSPVIHLFSESIAGAATIRGFGQEKRFMKRNLYLLDCFARPLFSSLAAIEWLCLRMELLSTFVFAFCMAILVSFPPGTIEPSMAGLAVTYGLNLNARMSRWILSFCKLENRIISVERIYQYCKLPSEAPLIIENSRPSSSWPENGNIELVDLKVRYKDDLPLVLHGISCIFPGGKKIGIVGRTGSGKSTLIQALFRLIEPTGGKVIIDDVDISRIGLHDLRSRLSIIPQDPTLFEGTIRMNLDPLEECTDQEIWEALEKCQLGEVIRSKDEKLDSPVLENGDNWSVGQRQLIALGRALLKQAKILVLDEATASVDTATDNLIQKIIRSEFKDCTVCTIAHRIPTVIDSDLVLVLSDGKIAEFDTPQRLLEDKSSMFMQLVSEYSTRSSCI</sequence>
<protein>
    <recommendedName>
        <fullName evidence="7">ABC transporter C family member 13</fullName>
        <shortName evidence="7">OsABCC13</shortName>
        <ecNumber evidence="9">7.-.-.-</ecNumber>
    </recommendedName>
    <alternativeName>
        <fullName evidence="6">Multidrug resistance-associated protein 13</fullName>
        <shortName evidence="6">OsMRP13</shortName>
    </alternativeName>
    <alternativeName>
        <fullName evidence="8">OsMRP5</fullName>
    </alternativeName>
    <alternativeName>
        <fullName evidence="8">Protein LOW PHYTIC ACID 2</fullName>
    </alternativeName>
</protein>
<reference key="1">
    <citation type="journal article" date="2005" name="Genome Res.">
        <title>Sequence, annotation, and analysis of synteny between rice chromosome 3 and diverged grass species.</title>
        <authorList>
            <consortium name="The rice chromosome 3 sequencing consortium"/>
            <person name="Buell C.R."/>
            <person name="Yuan Q."/>
            <person name="Ouyang S."/>
            <person name="Liu J."/>
            <person name="Zhu W."/>
            <person name="Wang A."/>
            <person name="Maiti R."/>
            <person name="Haas B."/>
            <person name="Wortman J."/>
            <person name="Pertea M."/>
            <person name="Jones K.M."/>
            <person name="Kim M."/>
            <person name="Overton L."/>
            <person name="Tsitrin T."/>
            <person name="Fadrosh D."/>
            <person name="Bera J."/>
            <person name="Weaver B."/>
            <person name="Jin S."/>
            <person name="Johri S."/>
            <person name="Reardon M."/>
            <person name="Webb K."/>
            <person name="Hill J."/>
            <person name="Moffat K."/>
            <person name="Tallon L."/>
            <person name="Van Aken S."/>
            <person name="Lewis M."/>
            <person name="Utterback T."/>
            <person name="Feldblyum T."/>
            <person name="Zismann V."/>
            <person name="Iobst S."/>
            <person name="Hsiao J."/>
            <person name="de Vazeille A.R."/>
            <person name="Salzberg S.L."/>
            <person name="White O."/>
            <person name="Fraser C.M."/>
            <person name="Yu Y."/>
            <person name="Kim H."/>
            <person name="Rambo T."/>
            <person name="Currie J."/>
            <person name="Collura K."/>
            <person name="Kernodle-Thompson S."/>
            <person name="Wei F."/>
            <person name="Kudrna K."/>
            <person name="Ammiraju J.S.S."/>
            <person name="Luo M."/>
            <person name="Goicoechea J.L."/>
            <person name="Wing R.A."/>
            <person name="Henry D."/>
            <person name="Oates R."/>
            <person name="Palmer M."/>
            <person name="Pries G."/>
            <person name="Saski C."/>
            <person name="Simmons J."/>
            <person name="Soderlund C."/>
            <person name="Nelson W."/>
            <person name="de la Bastide M."/>
            <person name="Spiegel L."/>
            <person name="Nascimento L."/>
            <person name="Huang E."/>
            <person name="Preston R."/>
            <person name="Zutavern T."/>
            <person name="Palmer L."/>
            <person name="O'Shaughnessy A."/>
            <person name="Dike S."/>
            <person name="McCombie W.R."/>
            <person name="Minx P."/>
            <person name="Cordum H."/>
            <person name="Wilson R."/>
            <person name="Jin W."/>
            <person name="Lee H.R."/>
            <person name="Jiang J."/>
            <person name="Jackson S."/>
        </authorList>
    </citation>
    <scope>NUCLEOTIDE SEQUENCE [LARGE SCALE GENOMIC DNA]</scope>
    <source>
        <strain>cv. Nipponbare</strain>
    </source>
</reference>
<reference key="2">
    <citation type="journal article" date="2005" name="Nature">
        <title>The map-based sequence of the rice genome.</title>
        <authorList>
            <consortium name="International rice genome sequencing project (IRGSP)"/>
        </authorList>
    </citation>
    <scope>NUCLEOTIDE SEQUENCE [LARGE SCALE GENOMIC DNA]</scope>
    <source>
        <strain>cv. Nipponbare</strain>
    </source>
</reference>
<reference key="3">
    <citation type="journal article" date="2008" name="Nucleic Acids Res.">
        <title>The rice annotation project database (RAP-DB): 2008 update.</title>
        <authorList>
            <consortium name="The rice annotation project (RAP)"/>
        </authorList>
    </citation>
    <scope>GENOME REANNOTATION</scope>
    <source>
        <strain>cv. Nipponbare</strain>
    </source>
</reference>
<reference key="4">
    <citation type="journal article" date="2013" name="Rice">
        <title>Improvement of the Oryza sativa Nipponbare reference genome using next generation sequence and optical map data.</title>
        <authorList>
            <person name="Kawahara Y."/>
            <person name="de la Bastide M."/>
            <person name="Hamilton J.P."/>
            <person name="Kanamori H."/>
            <person name="McCombie W.R."/>
            <person name="Ouyang S."/>
            <person name="Schwartz D.C."/>
            <person name="Tanaka T."/>
            <person name="Wu J."/>
            <person name="Zhou S."/>
            <person name="Childs K.L."/>
            <person name="Davidson R.M."/>
            <person name="Lin H."/>
            <person name="Quesada-Ocampo L."/>
            <person name="Vaillancourt B."/>
            <person name="Sakai H."/>
            <person name="Lee S.S."/>
            <person name="Kim J."/>
            <person name="Numa H."/>
            <person name="Itoh T."/>
            <person name="Buell C.R."/>
            <person name="Matsumoto T."/>
        </authorList>
    </citation>
    <scope>GENOME REANNOTATION</scope>
    <source>
        <strain>cv. Nipponbare</strain>
    </source>
</reference>
<reference key="5">
    <citation type="journal article" date="2006" name="FEBS Lett.">
        <title>The multidrug resistance-associated protein (MRP/ABCC) subfamily of ATP-binding cassette transporters in plants.</title>
        <authorList>
            <person name="Klein M."/>
            <person name="Burla B."/>
            <person name="Martinoia E."/>
        </authorList>
    </citation>
    <scope>GENE FAMILY</scope>
    <scope>NOMENCLATURE</scope>
</reference>
<reference key="6">
    <citation type="journal article" date="2008" name="Trends Plant Sci.">
        <title>Plant ABC proteins - a unified nomenclature and updated inventory.</title>
        <authorList>
            <person name="Verrier P.J."/>
            <person name="Bird D."/>
            <person name="Burla B."/>
            <person name="Dassa E."/>
            <person name="Forestier C."/>
            <person name="Geisler M."/>
            <person name="Klein M."/>
            <person name="Kolukisaoglu H.U."/>
            <person name="Lee Y."/>
            <person name="Martinoia E."/>
            <person name="Murphy A."/>
            <person name="Rea P.A."/>
            <person name="Samuels L."/>
            <person name="Schulz B."/>
            <person name="Spalding E.J."/>
            <person name="Yazaki K."/>
            <person name="Theodoulou F.L."/>
        </authorList>
    </citation>
    <scope>GENE FAMILY</scope>
    <scope>NOMENCLATURE</scope>
</reference>
<reference key="7">
    <citation type="journal article" date="2009" name="Theor. Appl. Genet.">
        <title>Mutations of the multi-drug resistance-associated protein ABC transporter gene 5 result in reduction of phytic acid in rice seeds.</title>
        <authorList>
            <person name="Xu X.H."/>
            <person name="Zhao H.J."/>
            <person name="Liu Q.L."/>
            <person name="Frank T."/>
            <person name="Engel K.H."/>
            <person name="An G."/>
            <person name="Shu Q.Y."/>
        </authorList>
    </citation>
    <scope>FUNCTION</scope>
    <scope>TISSUE SPECIFICITY</scope>
    <scope>DISRUPTION PHENOTYPE</scope>
</reference>
<evidence type="ECO:0000255" key="1"/>
<evidence type="ECO:0000255" key="2">
    <source>
        <dbReference type="PROSITE-ProRule" id="PRU00434"/>
    </source>
</evidence>
<evidence type="ECO:0000255" key="3">
    <source>
        <dbReference type="PROSITE-ProRule" id="PRU00441"/>
    </source>
</evidence>
<evidence type="ECO:0000256" key="4">
    <source>
        <dbReference type="SAM" id="MobiDB-lite"/>
    </source>
</evidence>
<evidence type="ECO:0000269" key="5">
    <source>
    </source>
</evidence>
<evidence type="ECO:0000303" key="6">
    <source>
    </source>
</evidence>
<evidence type="ECO:0000303" key="7">
    <source>
    </source>
</evidence>
<evidence type="ECO:0000303" key="8">
    <source>
    </source>
</evidence>
<evidence type="ECO:0000305" key="9"/>
<evidence type="ECO:0000312" key="10">
    <source>
        <dbReference type="EMBL" id="ABF93919.1"/>
    </source>
</evidence>
<evidence type="ECO:0000312" key="11">
    <source>
        <dbReference type="EMBL" id="BAF10848.1"/>
    </source>
</evidence>
<organism>
    <name type="scientific">Oryza sativa subsp. japonica</name>
    <name type="common">Rice</name>
    <dbReference type="NCBI Taxonomy" id="39947"/>
    <lineage>
        <taxon>Eukaryota</taxon>
        <taxon>Viridiplantae</taxon>
        <taxon>Streptophyta</taxon>
        <taxon>Embryophyta</taxon>
        <taxon>Tracheophyta</taxon>
        <taxon>Spermatophyta</taxon>
        <taxon>Magnoliopsida</taxon>
        <taxon>Liliopsida</taxon>
        <taxon>Poales</taxon>
        <taxon>Poaceae</taxon>
        <taxon>BOP clade</taxon>
        <taxon>Oryzoideae</taxon>
        <taxon>Oryzeae</taxon>
        <taxon>Oryzinae</taxon>
        <taxon>Oryza</taxon>
        <taxon>Oryza sativa</taxon>
    </lineage>
</organism>
<feature type="chain" id="PRO_0000431886" description="ABC transporter C family member 13">
    <location>
        <begin position="1"/>
        <end position="1505"/>
    </location>
</feature>
<feature type="transmembrane region" description="Helical; Name=1" evidence="1">
    <location>
        <begin position="11"/>
        <end position="31"/>
    </location>
</feature>
<feature type="transmembrane region" description="Helical; Name=2" evidence="1">
    <location>
        <begin position="54"/>
        <end position="68"/>
    </location>
</feature>
<feature type="transmembrane region" description="Helical; Name=3" evidence="1">
    <location>
        <begin position="71"/>
        <end position="91"/>
    </location>
</feature>
<feature type="transmembrane region" description="Helical; Name=4" evidence="1">
    <location>
        <begin position="102"/>
        <end position="122"/>
    </location>
</feature>
<feature type="transmembrane region" description="Helical; Name=5" evidence="1">
    <location>
        <begin position="131"/>
        <end position="151"/>
    </location>
</feature>
<feature type="transmembrane region" description="Helical; Name=6" evidence="1">
    <location>
        <begin position="171"/>
        <end position="191"/>
    </location>
</feature>
<feature type="transmembrane region" description="Helical; Name=7" evidence="1">
    <location>
        <begin position="313"/>
        <end position="333"/>
    </location>
</feature>
<feature type="transmembrane region" description="Helical; Name=8" evidence="1">
    <location>
        <begin position="336"/>
        <end position="356"/>
    </location>
</feature>
<feature type="transmembrane region" description="Helical; Name=9" evidence="1">
    <location>
        <begin position="367"/>
        <end position="387"/>
    </location>
</feature>
<feature type="transmembrane region" description="Helical; Name=10" evidence="1">
    <location>
        <begin position="421"/>
        <end position="441"/>
    </location>
</feature>
<feature type="transmembrane region" description="Helical; Name=11" evidence="1">
    <location>
        <begin position="447"/>
        <end position="467"/>
    </location>
</feature>
<feature type="transmembrane region" description="Helical; Name=12" evidence="1">
    <location>
        <begin position="534"/>
        <end position="554"/>
    </location>
</feature>
<feature type="transmembrane region" description="Helical; Name=13" evidence="1">
    <location>
        <begin position="940"/>
        <end position="960"/>
    </location>
</feature>
<feature type="transmembrane region" description="Helical; Name=14" evidence="1">
    <location>
        <begin position="980"/>
        <end position="1000"/>
    </location>
</feature>
<feature type="transmembrane region" description="Helical; Name=15" evidence="1">
    <location>
        <begin position="1055"/>
        <end position="1077"/>
    </location>
</feature>
<feature type="transmembrane region" description="Helical; Name=16" evidence="1">
    <location>
        <begin position="1081"/>
        <end position="1103"/>
    </location>
</feature>
<feature type="transmembrane region" description="Helical; Name=17" evidence="1">
    <location>
        <begin position="1149"/>
        <end position="1169"/>
    </location>
</feature>
<feature type="transmembrane region" description="Helical; Name=18" evidence="1">
    <location>
        <begin position="1174"/>
        <end position="1194"/>
    </location>
</feature>
<feature type="domain" description="ABC transmembrane type-1 1" evidence="3">
    <location>
        <begin position="314"/>
        <end position="589"/>
    </location>
</feature>
<feature type="domain" description="ABC transporter 1" evidence="2">
    <location>
        <begin position="623"/>
        <end position="846"/>
    </location>
</feature>
<feature type="domain" description="ABC transmembrane type-1 2" evidence="3">
    <location>
        <begin position="945"/>
        <end position="1215"/>
    </location>
</feature>
<feature type="domain" description="ABC transporter 2" evidence="2">
    <location>
        <begin position="1262"/>
        <end position="1496"/>
    </location>
</feature>
<feature type="region of interest" description="Disordered" evidence="4">
    <location>
        <begin position="881"/>
        <end position="919"/>
    </location>
</feature>
<feature type="compositionally biased region" description="Polar residues" evidence="4">
    <location>
        <begin position="881"/>
        <end position="897"/>
    </location>
</feature>
<feature type="compositionally biased region" description="Basic and acidic residues" evidence="4">
    <location>
        <begin position="904"/>
        <end position="919"/>
    </location>
</feature>
<feature type="binding site" evidence="2">
    <location>
        <begin position="658"/>
        <end position="665"/>
    </location>
    <ligand>
        <name>ATP</name>
        <dbReference type="ChEBI" id="CHEBI:30616"/>
    </ligand>
</feature>
<feature type="binding site" evidence="2">
    <location>
        <begin position="1296"/>
        <end position="1303"/>
    </location>
    <ligand>
        <name>ATP</name>
        <dbReference type="ChEBI" id="CHEBI:30616"/>
    </ligand>
</feature>
<keyword id="KW-0067">ATP-binding</keyword>
<keyword id="KW-0472">Membrane</keyword>
<keyword id="KW-0547">Nucleotide-binding</keyword>
<keyword id="KW-1185">Reference proteome</keyword>
<keyword id="KW-0677">Repeat</keyword>
<keyword id="KW-1278">Translocase</keyword>
<keyword id="KW-0812">Transmembrane</keyword>
<keyword id="KW-1133">Transmembrane helix</keyword>
<keyword id="KW-0813">Transport</keyword>
<name>AB13C_ORYSJ</name>
<dbReference type="EC" id="7.-.-.-" evidence="9"/>
<dbReference type="EMBL" id="DP000009">
    <property type="protein sequence ID" value="ABF93919.1"/>
    <property type="molecule type" value="Genomic_DNA"/>
</dbReference>
<dbReference type="EMBL" id="AP008209">
    <property type="protein sequence ID" value="BAF10848.1"/>
    <property type="molecule type" value="Genomic_DNA"/>
</dbReference>
<dbReference type="EMBL" id="AP014959">
    <property type="protein sequence ID" value="BAS82235.1"/>
    <property type="molecule type" value="Genomic_DNA"/>
</dbReference>
<dbReference type="RefSeq" id="XP_015630971.1">
    <property type="nucleotide sequence ID" value="XM_015775485.1"/>
</dbReference>
<dbReference type="SMR" id="Q10RX7"/>
<dbReference type="FunCoup" id="Q10RX7">
    <property type="interactions" value="1929"/>
</dbReference>
<dbReference type="STRING" id="39947.Q10RX7"/>
<dbReference type="TCDB" id="3.A.1.208.34">
    <property type="family name" value="the atp-binding cassette (abc) superfamily"/>
</dbReference>
<dbReference type="PaxDb" id="39947-Q10RX7"/>
<dbReference type="EnsemblPlants" id="Os03t0142800-01">
    <property type="protein sequence ID" value="Os03t0142800-01"/>
    <property type="gene ID" value="Os03g0142800"/>
</dbReference>
<dbReference type="Gramene" id="Os03t0142800-01">
    <property type="protein sequence ID" value="Os03t0142800-01"/>
    <property type="gene ID" value="Os03g0142800"/>
</dbReference>
<dbReference type="KEGG" id="dosa:Os03g0142800"/>
<dbReference type="eggNOG" id="KOG0054">
    <property type="taxonomic scope" value="Eukaryota"/>
</dbReference>
<dbReference type="HOGENOM" id="CLU_000604_27_3_1"/>
<dbReference type="InParanoid" id="Q10RX7"/>
<dbReference type="OMA" id="QVTDAWT"/>
<dbReference type="OrthoDB" id="6500128at2759"/>
<dbReference type="Proteomes" id="UP000000763">
    <property type="component" value="Chromosome 3"/>
</dbReference>
<dbReference type="Proteomes" id="UP000059680">
    <property type="component" value="Chromosome 3"/>
</dbReference>
<dbReference type="ExpressionAtlas" id="Q10RX7">
    <property type="expression patterns" value="baseline and differential"/>
</dbReference>
<dbReference type="GO" id="GO:0016020">
    <property type="term" value="C:membrane"/>
    <property type="evidence" value="ECO:0000318"/>
    <property type="project" value="GO_Central"/>
</dbReference>
<dbReference type="GO" id="GO:0140359">
    <property type="term" value="F:ABC-type transporter activity"/>
    <property type="evidence" value="ECO:0007669"/>
    <property type="project" value="InterPro"/>
</dbReference>
<dbReference type="GO" id="GO:0005524">
    <property type="term" value="F:ATP binding"/>
    <property type="evidence" value="ECO:0007669"/>
    <property type="project" value="UniProtKB-KW"/>
</dbReference>
<dbReference type="GO" id="GO:0016887">
    <property type="term" value="F:ATP hydrolysis activity"/>
    <property type="evidence" value="ECO:0007669"/>
    <property type="project" value="InterPro"/>
</dbReference>
<dbReference type="GO" id="GO:0042626">
    <property type="term" value="F:ATPase-coupled transmembrane transporter activity"/>
    <property type="evidence" value="ECO:0000318"/>
    <property type="project" value="GO_Central"/>
</dbReference>
<dbReference type="GO" id="GO:0055085">
    <property type="term" value="P:transmembrane transport"/>
    <property type="evidence" value="ECO:0000315"/>
    <property type="project" value="UniProtKB"/>
</dbReference>
<dbReference type="CDD" id="cd18579">
    <property type="entry name" value="ABC_6TM_ABCC_D1"/>
    <property type="match status" value="1"/>
</dbReference>
<dbReference type="CDD" id="cd18580">
    <property type="entry name" value="ABC_6TM_ABCC_D2"/>
    <property type="match status" value="1"/>
</dbReference>
<dbReference type="CDD" id="cd03250">
    <property type="entry name" value="ABCC_MRP_domain1"/>
    <property type="match status" value="1"/>
</dbReference>
<dbReference type="CDD" id="cd03244">
    <property type="entry name" value="ABCC_MRP_domain2"/>
    <property type="match status" value="1"/>
</dbReference>
<dbReference type="FunFam" id="1.20.1560.10:FF:000003">
    <property type="entry name" value="ABC transporter C family member 10"/>
    <property type="match status" value="1"/>
</dbReference>
<dbReference type="FunFam" id="3.40.50.300:FF:000169">
    <property type="entry name" value="ABC transporter C family member 3"/>
    <property type="match status" value="1"/>
</dbReference>
<dbReference type="FunFam" id="1.20.1560.10:FF:000002">
    <property type="entry name" value="ABC transporter C family member 5"/>
    <property type="match status" value="1"/>
</dbReference>
<dbReference type="FunFam" id="3.40.50.300:FF:000508">
    <property type="entry name" value="ABC transporter C family member 5"/>
    <property type="match status" value="1"/>
</dbReference>
<dbReference type="Gene3D" id="1.20.1560.10">
    <property type="entry name" value="ABC transporter type 1, transmembrane domain"/>
    <property type="match status" value="2"/>
</dbReference>
<dbReference type="Gene3D" id="3.40.50.300">
    <property type="entry name" value="P-loop containing nucleotide triphosphate hydrolases"/>
    <property type="match status" value="2"/>
</dbReference>
<dbReference type="InterPro" id="IPR003593">
    <property type="entry name" value="AAA+_ATPase"/>
</dbReference>
<dbReference type="InterPro" id="IPR011527">
    <property type="entry name" value="ABC1_TM_dom"/>
</dbReference>
<dbReference type="InterPro" id="IPR036640">
    <property type="entry name" value="ABC1_TM_sf"/>
</dbReference>
<dbReference type="InterPro" id="IPR003439">
    <property type="entry name" value="ABC_transporter-like_ATP-bd"/>
</dbReference>
<dbReference type="InterPro" id="IPR017871">
    <property type="entry name" value="ABC_transporter-like_CS"/>
</dbReference>
<dbReference type="InterPro" id="IPR050173">
    <property type="entry name" value="ABC_transporter_C-like"/>
</dbReference>
<dbReference type="InterPro" id="IPR044746">
    <property type="entry name" value="ABCC_6TM_D1"/>
</dbReference>
<dbReference type="InterPro" id="IPR044726">
    <property type="entry name" value="ABCC_6TM_D2"/>
</dbReference>
<dbReference type="InterPro" id="IPR027417">
    <property type="entry name" value="P-loop_NTPase"/>
</dbReference>
<dbReference type="PANTHER" id="PTHR24223:SF189">
    <property type="entry name" value="ABC TRANSPORTER C FAMILY MEMBER 5"/>
    <property type="match status" value="1"/>
</dbReference>
<dbReference type="PANTHER" id="PTHR24223">
    <property type="entry name" value="ATP-BINDING CASSETTE SUB-FAMILY C"/>
    <property type="match status" value="1"/>
</dbReference>
<dbReference type="Pfam" id="PF00664">
    <property type="entry name" value="ABC_membrane"/>
    <property type="match status" value="2"/>
</dbReference>
<dbReference type="Pfam" id="PF00005">
    <property type="entry name" value="ABC_tran"/>
    <property type="match status" value="2"/>
</dbReference>
<dbReference type="SMART" id="SM00382">
    <property type="entry name" value="AAA"/>
    <property type="match status" value="2"/>
</dbReference>
<dbReference type="SUPFAM" id="SSF90123">
    <property type="entry name" value="ABC transporter transmembrane region"/>
    <property type="match status" value="2"/>
</dbReference>
<dbReference type="SUPFAM" id="SSF52540">
    <property type="entry name" value="P-loop containing nucleoside triphosphate hydrolases"/>
    <property type="match status" value="2"/>
</dbReference>
<dbReference type="PROSITE" id="PS50929">
    <property type="entry name" value="ABC_TM1F"/>
    <property type="match status" value="2"/>
</dbReference>
<dbReference type="PROSITE" id="PS00211">
    <property type="entry name" value="ABC_TRANSPORTER_1"/>
    <property type="match status" value="1"/>
</dbReference>
<dbReference type="PROSITE" id="PS50893">
    <property type="entry name" value="ABC_TRANSPORTER_2"/>
    <property type="match status" value="2"/>
</dbReference>
<accession>Q10RX7</accession>
<accession>A0A0P0VSW0</accession>
<proteinExistence type="evidence at transcript level"/>
<gene>
    <name evidence="7" type="primary">ABCC13</name>
    <name evidence="8" type="synonym">LPA2</name>
    <name evidence="11" type="ordered locus">Os03g0142800</name>
    <name evidence="10" type="ordered locus">LOC_Os03g04920</name>
</gene>